<accession>Q8RD71</accession>
<dbReference type="EC" id="4.2.1.59" evidence="1"/>
<dbReference type="EMBL" id="AE008691">
    <property type="protein sequence ID" value="AAM23476.1"/>
    <property type="molecule type" value="Genomic_DNA"/>
</dbReference>
<dbReference type="RefSeq" id="WP_011024675.1">
    <property type="nucleotide sequence ID" value="NC_003869.1"/>
</dbReference>
<dbReference type="SMR" id="Q8RD71"/>
<dbReference type="STRING" id="273068.TTE0175"/>
<dbReference type="KEGG" id="tte:TTE0175"/>
<dbReference type="eggNOG" id="COG0764">
    <property type="taxonomic scope" value="Bacteria"/>
</dbReference>
<dbReference type="HOGENOM" id="CLU_078912_3_0_9"/>
<dbReference type="OrthoDB" id="9772788at2"/>
<dbReference type="Proteomes" id="UP000000555">
    <property type="component" value="Chromosome"/>
</dbReference>
<dbReference type="GO" id="GO:0005737">
    <property type="term" value="C:cytoplasm"/>
    <property type="evidence" value="ECO:0007669"/>
    <property type="project" value="UniProtKB-SubCell"/>
</dbReference>
<dbReference type="GO" id="GO:0016020">
    <property type="term" value="C:membrane"/>
    <property type="evidence" value="ECO:0007669"/>
    <property type="project" value="GOC"/>
</dbReference>
<dbReference type="GO" id="GO:0019171">
    <property type="term" value="F:(3R)-hydroxyacyl-[acyl-carrier-protein] dehydratase activity"/>
    <property type="evidence" value="ECO:0007669"/>
    <property type="project" value="UniProtKB-EC"/>
</dbReference>
<dbReference type="GO" id="GO:0006633">
    <property type="term" value="P:fatty acid biosynthetic process"/>
    <property type="evidence" value="ECO:0007669"/>
    <property type="project" value="UniProtKB-UniRule"/>
</dbReference>
<dbReference type="GO" id="GO:0009245">
    <property type="term" value="P:lipid A biosynthetic process"/>
    <property type="evidence" value="ECO:0007669"/>
    <property type="project" value="UniProtKB-UniRule"/>
</dbReference>
<dbReference type="CDD" id="cd01288">
    <property type="entry name" value="FabZ"/>
    <property type="match status" value="1"/>
</dbReference>
<dbReference type="FunFam" id="3.10.129.10:FF:000001">
    <property type="entry name" value="3-hydroxyacyl-[acyl-carrier-protein] dehydratase FabZ"/>
    <property type="match status" value="1"/>
</dbReference>
<dbReference type="Gene3D" id="3.10.129.10">
    <property type="entry name" value="Hotdog Thioesterase"/>
    <property type="match status" value="1"/>
</dbReference>
<dbReference type="HAMAP" id="MF_00406">
    <property type="entry name" value="FabZ"/>
    <property type="match status" value="1"/>
</dbReference>
<dbReference type="InterPro" id="IPR013114">
    <property type="entry name" value="FabA_FabZ"/>
</dbReference>
<dbReference type="InterPro" id="IPR010084">
    <property type="entry name" value="FabZ"/>
</dbReference>
<dbReference type="InterPro" id="IPR029069">
    <property type="entry name" value="HotDog_dom_sf"/>
</dbReference>
<dbReference type="NCBIfam" id="TIGR01750">
    <property type="entry name" value="fabZ"/>
    <property type="match status" value="1"/>
</dbReference>
<dbReference type="NCBIfam" id="NF000582">
    <property type="entry name" value="PRK00006.1"/>
    <property type="match status" value="1"/>
</dbReference>
<dbReference type="PANTHER" id="PTHR30272">
    <property type="entry name" value="3-HYDROXYACYL-[ACYL-CARRIER-PROTEIN] DEHYDRATASE"/>
    <property type="match status" value="1"/>
</dbReference>
<dbReference type="PANTHER" id="PTHR30272:SF1">
    <property type="entry name" value="3-HYDROXYACYL-[ACYL-CARRIER-PROTEIN] DEHYDRATASE"/>
    <property type="match status" value="1"/>
</dbReference>
<dbReference type="Pfam" id="PF07977">
    <property type="entry name" value="FabA"/>
    <property type="match status" value="1"/>
</dbReference>
<dbReference type="SUPFAM" id="SSF54637">
    <property type="entry name" value="Thioesterase/thiol ester dehydrase-isomerase"/>
    <property type="match status" value="1"/>
</dbReference>
<evidence type="ECO:0000255" key="1">
    <source>
        <dbReference type="HAMAP-Rule" id="MF_00406"/>
    </source>
</evidence>
<keyword id="KW-0963">Cytoplasm</keyword>
<keyword id="KW-0441">Lipid A biosynthesis</keyword>
<keyword id="KW-0444">Lipid biosynthesis</keyword>
<keyword id="KW-0443">Lipid metabolism</keyword>
<keyword id="KW-0456">Lyase</keyword>
<keyword id="KW-1185">Reference proteome</keyword>
<feature type="chain" id="PRO_0000091756" description="3-hydroxyacyl-[acyl-carrier-protein] dehydratase FabZ">
    <location>
        <begin position="1"/>
        <end position="141"/>
    </location>
</feature>
<feature type="active site" evidence="1">
    <location>
        <position position="47"/>
    </location>
</feature>
<organism>
    <name type="scientific">Caldanaerobacter subterraneus subsp. tengcongensis (strain DSM 15242 / JCM 11007 / NBRC 100824 / MB4)</name>
    <name type="common">Thermoanaerobacter tengcongensis</name>
    <dbReference type="NCBI Taxonomy" id="273068"/>
    <lineage>
        <taxon>Bacteria</taxon>
        <taxon>Bacillati</taxon>
        <taxon>Bacillota</taxon>
        <taxon>Clostridia</taxon>
        <taxon>Thermoanaerobacterales</taxon>
        <taxon>Thermoanaerobacteraceae</taxon>
        <taxon>Caldanaerobacter</taxon>
    </lineage>
</organism>
<gene>
    <name evidence="1" type="primary">fabZ</name>
    <name type="synonym">fabA</name>
    <name type="ordered locus">TTE0175</name>
</gene>
<name>FABZ_CALS4</name>
<protein>
    <recommendedName>
        <fullName evidence="1">3-hydroxyacyl-[acyl-carrier-protein] dehydratase FabZ</fullName>
        <ecNumber evidence="1">4.2.1.59</ecNumber>
    </recommendedName>
    <alternativeName>
        <fullName evidence="1">(3R)-hydroxymyristoyl-[acyl-carrier-protein] dehydratase</fullName>
        <shortName evidence="1">(3R)-hydroxymyristoyl-ACP dehydrase</shortName>
    </alternativeName>
    <alternativeName>
        <fullName evidence="1">Beta-hydroxyacyl-ACP dehydratase</fullName>
    </alternativeName>
</protein>
<comment type="function">
    <text evidence="1">Involved in unsaturated fatty acids biosynthesis. Catalyzes the dehydration of short chain beta-hydroxyacyl-ACPs and long chain saturated and unsaturated beta-hydroxyacyl-ACPs.</text>
</comment>
<comment type="catalytic activity">
    <reaction evidence="1">
        <text>a (3R)-hydroxyacyl-[ACP] = a (2E)-enoyl-[ACP] + H2O</text>
        <dbReference type="Rhea" id="RHEA:13097"/>
        <dbReference type="Rhea" id="RHEA-COMP:9925"/>
        <dbReference type="Rhea" id="RHEA-COMP:9945"/>
        <dbReference type="ChEBI" id="CHEBI:15377"/>
        <dbReference type="ChEBI" id="CHEBI:78784"/>
        <dbReference type="ChEBI" id="CHEBI:78827"/>
        <dbReference type="EC" id="4.2.1.59"/>
    </reaction>
</comment>
<comment type="subcellular location">
    <subcellularLocation>
        <location evidence="1">Cytoplasm</location>
    </subcellularLocation>
</comment>
<comment type="similarity">
    <text evidence="1">Belongs to the thioester dehydratase family. FabZ subfamily.</text>
</comment>
<reference key="1">
    <citation type="journal article" date="2002" name="Genome Res.">
        <title>A complete sequence of the T. tengcongensis genome.</title>
        <authorList>
            <person name="Bao Q."/>
            <person name="Tian Y."/>
            <person name="Li W."/>
            <person name="Xu Z."/>
            <person name="Xuan Z."/>
            <person name="Hu S."/>
            <person name="Dong W."/>
            <person name="Yang J."/>
            <person name="Chen Y."/>
            <person name="Xue Y."/>
            <person name="Xu Y."/>
            <person name="Lai X."/>
            <person name="Huang L."/>
            <person name="Dong X."/>
            <person name="Ma Y."/>
            <person name="Ling L."/>
            <person name="Tan H."/>
            <person name="Chen R."/>
            <person name="Wang J."/>
            <person name="Yu J."/>
            <person name="Yang H."/>
        </authorList>
    </citation>
    <scope>NUCLEOTIDE SEQUENCE [LARGE SCALE GENOMIC DNA]</scope>
    <source>
        <strain>DSM 15242 / JCM 11007 / NBRC 100824 / MB4</strain>
    </source>
</reference>
<sequence length="141" mass="15604">MENKDIRKILPHRYPFLLVDRIIELEEGKRAVGIKNVTSNEPFFQGHFPDNPIMPGVLIVEALAQVAGIAVMNVEEFKGKLGLFAGIDKCRFKKVVRPGDQLILEVSIDSIRMGLVKAKGVAKVGEEIAATAELMFVMAEE</sequence>
<proteinExistence type="inferred from homology"/>